<gene>
    <name evidence="1" type="primary">rplY</name>
    <name evidence="1" type="synonym">ctc</name>
    <name type="ordered locus">GFO_3502</name>
</gene>
<protein>
    <recommendedName>
        <fullName evidence="1">Large ribosomal subunit protein bL25</fullName>
    </recommendedName>
    <alternativeName>
        <fullName evidence="3">50S ribosomal protein L25</fullName>
    </alternativeName>
    <alternativeName>
        <fullName evidence="1">General stress protein CTC</fullName>
    </alternativeName>
</protein>
<proteinExistence type="inferred from homology"/>
<sequence>MKSITINGSKRESVGKKATKALRNAGQVPCVLYGVEGDPLHFAAEEISFKNLVYTPDVHTVKIKLKSGESYDAILQDIQFHPLTDAILHIDFYQIFGEKPITMEIPIHTEGVARGVKNGGVLRYNLRRLKVRGLPADLPDYIVANVSKLKIGQKLYVTGVDSKDFVIQHPDNTVICQVRTSRNLVELEDEDEDEDEVAADEVPATEVDDQAAVKEGEGKE</sequence>
<reference key="1">
    <citation type="journal article" date="2006" name="Environ. Microbiol.">
        <title>Whole genome analysis of the marine Bacteroidetes'Gramella forsetii' reveals adaptations to degradation of polymeric organic matter.</title>
        <authorList>
            <person name="Bauer M."/>
            <person name="Kube M."/>
            <person name="Teeling H."/>
            <person name="Richter M."/>
            <person name="Lombardot T."/>
            <person name="Allers E."/>
            <person name="Wuerdemann C.A."/>
            <person name="Quast C."/>
            <person name="Kuhl H."/>
            <person name="Knaust F."/>
            <person name="Woebken D."/>
            <person name="Bischof K."/>
            <person name="Mussmann M."/>
            <person name="Choudhuri J.V."/>
            <person name="Meyer F."/>
            <person name="Reinhardt R."/>
            <person name="Amann R.I."/>
            <person name="Gloeckner F.O."/>
        </authorList>
    </citation>
    <scope>NUCLEOTIDE SEQUENCE [LARGE SCALE GENOMIC DNA]</scope>
    <source>
        <strain>DSM 17595 / CGMCC 1.15422 / KT0803</strain>
    </source>
</reference>
<name>RL25_CHRFK</name>
<comment type="function">
    <text evidence="1">This is one of the proteins that binds to the 5S RNA in the ribosome where it forms part of the central protuberance.</text>
</comment>
<comment type="subunit">
    <text evidence="1">Part of the 50S ribosomal subunit; part of the 5S rRNA/L5/L18/L25 subcomplex. Contacts the 5S rRNA. Binds to the 5S rRNA independently of L5 and L18.</text>
</comment>
<comment type="similarity">
    <text evidence="1">Belongs to the bacterial ribosomal protein bL25 family. CTC subfamily.</text>
</comment>
<keyword id="KW-0687">Ribonucleoprotein</keyword>
<keyword id="KW-0689">Ribosomal protein</keyword>
<keyword id="KW-0694">RNA-binding</keyword>
<keyword id="KW-0699">rRNA-binding</keyword>
<evidence type="ECO:0000255" key="1">
    <source>
        <dbReference type="HAMAP-Rule" id="MF_01334"/>
    </source>
</evidence>
<evidence type="ECO:0000256" key="2">
    <source>
        <dbReference type="SAM" id="MobiDB-lite"/>
    </source>
</evidence>
<evidence type="ECO:0000305" key="3"/>
<dbReference type="EMBL" id="CU207366">
    <property type="protein sequence ID" value="CAL68440.1"/>
    <property type="molecule type" value="Genomic_DNA"/>
</dbReference>
<dbReference type="RefSeq" id="WP_011711341.1">
    <property type="nucleotide sequence ID" value="NC_008571.1"/>
</dbReference>
<dbReference type="SMR" id="A0M745"/>
<dbReference type="STRING" id="411154.GFO_3502"/>
<dbReference type="KEGG" id="gfo:GFO_3502"/>
<dbReference type="eggNOG" id="COG1825">
    <property type="taxonomic scope" value="Bacteria"/>
</dbReference>
<dbReference type="HOGENOM" id="CLU_075939_2_1_10"/>
<dbReference type="OrthoDB" id="9786489at2"/>
<dbReference type="Proteomes" id="UP000000755">
    <property type="component" value="Chromosome"/>
</dbReference>
<dbReference type="GO" id="GO:0022625">
    <property type="term" value="C:cytosolic large ribosomal subunit"/>
    <property type="evidence" value="ECO:0007669"/>
    <property type="project" value="TreeGrafter"/>
</dbReference>
<dbReference type="GO" id="GO:0008097">
    <property type="term" value="F:5S rRNA binding"/>
    <property type="evidence" value="ECO:0007669"/>
    <property type="project" value="InterPro"/>
</dbReference>
<dbReference type="GO" id="GO:0003735">
    <property type="term" value="F:structural constituent of ribosome"/>
    <property type="evidence" value="ECO:0007669"/>
    <property type="project" value="InterPro"/>
</dbReference>
<dbReference type="GO" id="GO:0006412">
    <property type="term" value="P:translation"/>
    <property type="evidence" value="ECO:0007669"/>
    <property type="project" value="UniProtKB-UniRule"/>
</dbReference>
<dbReference type="CDD" id="cd00495">
    <property type="entry name" value="Ribosomal_L25_TL5_CTC"/>
    <property type="match status" value="1"/>
</dbReference>
<dbReference type="Gene3D" id="2.170.120.20">
    <property type="entry name" value="Ribosomal protein L25, beta domain"/>
    <property type="match status" value="1"/>
</dbReference>
<dbReference type="Gene3D" id="2.40.240.10">
    <property type="entry name" value="Ribosomal Protein L25, Chain P"/>
    <property type="match status" value="1"/>
</dbReference>
<dbReference type="HAMAP" id="MF_01334">
    <property type="entry name" value="Ribosomal_bL25_CTC"/>
    <property type="match status" value="1"/>
</dbReference>
<dbReference type="InterPro" id="IPR020056">
    <property type="entry name" value="Rbsml_bL25/Gln-tRNA_synth_N"/>
</dbReference>
<dbReference type="InterPro" id="IPR011035">
    <property type="entry name" value="Ribosomal_bL25/Gln-tRNA_synth"/>
</dbReference>
<dbReference type="InterPro" id="IPR020057">
    <property type="entry name" value="Ribosomal_bL25_b-dom"/>
</dbReference>
<dbReference type="InterPro" id="IPR037121">
    <property type="entry name" value="Ribosomal_bL25_C"/>
</dbReference>
<dbReference type="InterPro" id="IPR001021">
    <property type="entry name" value="Ribosomal_bL25_long"/>
</dbReference>
<dbReference type="InterPro" id="IPR029751">
    <property type="entry name" value="Ribosomal_L25_dom"/>
</dbReference>
<dbReference type="InterPro" id="IPR020930">
    <property type="entry name" value="Ribosomal_uL5_bac-type"/>
</dbReference>
<dbReference type="NCBIfam" id="TIGR00731">
    <property type="entry name" value="bL25_bact_ctc"/>
    <property type="match status" value="1"/>
</dbReference>
<dbReference type="NCBIfam" id="NF004132">
    <property type="entry name" value="PRK05618.2-2"/>
    <property type="match status" value="1"/>
</dbReference>
<dbReference type="PANTHER" id="PTHR33284">
    <property type="entry name" value="RIBOSOMAL PROTEIN L25/GLN-TRNA SYNTHETASE, ANTI-CODON-BINDING DOMAIN-CONTAINING PROTEIN"/>
    <property type="match status" value="1"/>
</dbReference>
<dbReference type="PANTHER" id="PTHR33284:SF1">
    <property type="entry name" value="RIBOSOMAL PROTEIN L25_GLN-TRNA SYNTHETASE, ANTI-CODON-BINDING DOMAIN-CONTAINING PROTEIN"/>
    <property type="match status" value="1"/>
</dbReference>
<dbReference type="Pfam" id="PF01386">
    <property type="entry name" value="Ribosomal_L25p"/>
    <property type="match status" value="1"/>
</dbReference>
<dbReference type="Pfam" id="PF14693">
    <property type="entry name" value="Ribosomal_TL5_C"/>
    <property type="match status" value="1"/>
</dbReference>
<dbReference type="SUPFAM" id="SSF50715">
    <property type="entry name" value="Ribosomal protein L25-like"/>
    <property type="match status" value="1"/>
</dbReference>
<organism>
    <name type="scientific">Christiangramia forsetii (strain DSM 17595 / CGMCC 1.15422 / KT0803)</name>
    <name type="common">Gramella forsetii</name>
    <dbReference type="NCBI Taxonomy" id="411154"/>
    <lineage>
        <taxon>Bacteria</taxon>
        <taxon>Pseudomonadati</taxon>
        <taxon>Bacteroidota</taxon>
        <taxon>Flavobacteriia</taxon>
        <taxon>Flavobacteriales</taxon>
        <taxon>Flavobacteriaceae</taxon>
        <taxon>Christiangramia</taxon>
    </lineage>
</organism>
<accession>A0M745</accession>
<feature type="chain" id="PRO_1000052891" description="Large ribosomal subunit protein bL25">
    <location>
        <begin position="1"/>
        <end position="220"/>
    </location>
</feature>
<feature type="region of interest" description="Disordered" evidence="2">
    <location>
        <begin position="186"/>
        <end position="220"/>
    </location>
</feature>
<feature type="compositionally biased region" description="Acidic residues" evidence="2">
    <location>
        <begin position="186"/>
        <end position="199"/>
    </location>
</feature>
<feature type="compositionally biased region" description="Basic and acidic residues" evidence="2">
    <location>
        <begin position="211"/>
        <end position="220"/>
    </location>
</feature>